<protein>
    <recommendedName>
        <fullName evidence="1">Erythronate-4-phosphate dehydrogenase</fullName>
        <ecNumber evidence="1">1.1.1.290</ecNumber>
    </recommendedName>
</protein>
<feature type="chain" id="PRO_0000297473" description="Erythronate-4-phosphate dehydrogenase">
    <location>
        <begin position="1"/>
        <end position="378"/>
    </location>
</feature>
<feature type="active site" evidence="1">
    <location>
        <position position="208"/>
    </location>
</feature>
<feature type="active site" evidence="1">
    <location>
        <position position="237"/>
    </location>
</feature>
<feature type="active site" description="Proton donor" evidence="1">
    <location>
        <position position="254"/>
    </location>
</feature>
<feature type="binding site" evidence="1">
    <location>
        <position position="45"/>
    </location>
    <ligand>
        <name>substrate</name>
    </ligand>
</feature>
<feature type="binding site" evidence="1">
    <location>
        <position position="66"/>
    </location>
    <ligand>
        <name>substrate</name>
    </ligand>
</feature>
<feature type="binding site" evidence="1">
    <location>
        <position position="146"/>
    </location>
    <ligand>
        <name>NAD(+)</name>
        <dbReference type="ChEBI" id="CHEBI:57540"/>
    </ligand>
</feature>
<feature type="binding site" evidence="1">
    <location>
        <position position="175"/>
    </location>
    <ligand>
        <name>NAD(+)</name>
        <dbReference type="ChEBI" id="CHEBI:57540"/>
    </ligand>
</feature>
<feature type="binding site" evidence="1">
    <location>
        <position position="232"/>
    </location>
    <ligand>
        <name>NAD(+)</name>
        <dbReference type="ChEBI" id="CHEBI:57540"/>
    </ligand>
</feature>
<feature type="binding site" evidence="1">
    <location>
        <position position="257"/>
    </location>
    <ligand>
        <name>NAD(+)</name>
        <dbReference type="ChEBI" id="CHEBI:57540"/>
    </ligand>
</feature>
<feature type="binding site" evidence="1">
    <location>
        <position position="258"/>
    </location>
    <ligand>
        <name>substrate</name>
    </ligand>
</feature>
<accession>Q31YD8</accession>
<dbReference type="EC" id="1.1.1.290" evidence="1"/>
<dbReference type="EMBL" id="CP000036">
    <property type="protein sequence ID" value="ABB66920.1"/>
    <property type="molecule type" value="Genomic_DNA"/>
</dbReference>
<dbReference type="RefSeq" id="WP_000699115.1">
    <property type="nucleotide sequence ID" value="NC_007613.1"/>
</dbReference>
<dbReference type="SMR" id="Q31YD8"/>
<dbReference type="KEGG" id="sbo:SBO_2357"/>
<dbReference type="HOGENOM" id="CLU_019796_4_0_6"/>
<dbReference type="UniPathway" id="UPA00244">
    <property type="reaction ID" value="UER00310"/>
</dbReference>
<dbReference type="Proteomes" id="UP000007067">
    <property type="component" value="Chromosome"/>
</dbReference>
<dbReference type="GO" id="GO:0005829">
    <property type="term" value="C:cytosol"/>
    <property type="evidence" value="ECO:0007669"/>
    <property type="project" value="TreeGrafter"/>
</dbReference>
<dbReference type="GO" id="GO:0033711">
    <property type="term" value="F:4-phosphoerythronate dehydrogenase activity"/>
    <property type="evidence" value="ECO:0007669"/>
    <property type="project" value="UniProtKB-EC"/>
</dbReference>
<dbReference type="GO" id="GO:0051287">
    <property type="term" value="F:NAD binding"/>
    <property type="evidence" value="ECO:0007669"/>
    <property type="project" value="InterPro"/>
</dbReference>
<dbReference type="GO" id="GO:0046983">
    <property type="term" value="F:protein dimerization activity"/>
    <property type="evidence" value="ECO:0007669"/>
    <property type="project" value="InterPro"/>
</dbReference>
<dbReference type="GO" id="GO:0036001">
    <property type="term" value="P:'de novo' pyridoxal 5'-phosphate biosynthetic process"/>
    <property type="evidence" value="ECO:0007669"/>
    <property type="project" value="TreeGrafter"/>
</dbReference>
<dbReference type="GO" id="GO:0008615">
    <property type="term" value="P:pyridoxine biosynthetic process"/>
    <property type="evidence" value="ECO:0007669"/>
    <property type="project" value="UniProtKB-UniRule"/>
</dbReference>
<dbReference type="CDD" id="cd12158">
    <property type="entry name" value="ErythrP_dh"/>
    <property type="match status" value="1"/>
</dbReference>
<dbReference type="FunFam" id="3.30.1370.170:FF:000001">
    <property type="entry name" value="Erythronate-4-phosphate dehydrogenase"/>
    <property type="match status" value="1"/>
</dbReference>
<dbReference type="FunFam" id="3.40.50.720:FF:000093">
    <property type="entry name" value="Erythronate-4-phosphate dehydrogenase"/>
    <property type="match status" value="1"/>
</dbReference>
<dbReference type="Gene3D" id="3.30.1370.170">
    <property type="match status" value="1"/>
</dbReference>
<dbReference type="Gene3D" id="3.40.50.720">
    <property type="entry name" value="NAD(P)-binding Rossmann-like Domain"/>
    <property type="match status" value="2"/>
</dbReference>
<dbReference type="HAMAP" id="MF_01825">
    <property type="entry name" value="PdxB"/>
    <property type="match status" value="1"/>
</dbReference>
<dbReference type="InterPro" id="IPR006139">
    <property type="entry name" value="D-isomer_2_OHA_DH_cat_dom"/>
</dbReference>
<dbReference type="InterPro" id="IPR029753">
    <property type="entry name" value="D-isomer_DH_CS"/>
</dbReference>
<dbReference type="InterPro" id="IPR029752">
    <property type="entry name" value="D-isomer_DH_CS1"/>
</dbReference>
<dbReference type="InterPro" id="IPR006140">
    <property type="entry name" value="D-isomer_DH_NAD-bd"/>
</dbReference>
<dbReference type="InterPro" id="IPR020921">
    <property type="entry name" value="Erythronate-4-P_DHase"/>
</dbReference>
<dbReference type="InterPro" id="IPR024531">
    <property type="entry name" value="Erythronate-4-P_DHase_dimer"/>
</dbReference>
<dbReference type="InterPro" id="IPR036291">
    <property type="entry name" value="NAD(P)-bd_dom_sf"/>
</dbReference>
<dbReference type="InterPro" id="IPR038251">
    <property type="entry name" value="PdxB_dimer_sf"/>
</dbReference>
<dbReference type="NCBIfam" id="NF001309">
    <property type="entry name" value="PRK00257.1"/>
    <property type="match status" value="1"/>
</dbReference>
<dbReference type="NCBIfam" id="NF011966">
    <property type="entry name" value="PRK15438.1"/>
    <property type="match status" value="1"/>
</dbReference>
<dbReference type="PANTHER" id="PTHR42938">
    <property type="entry name" value="FORMATE DEHYDROGENASE 1"/>
    <property type="match status" value="1"/>
</dbReference>
<dbReference type="PANTHER" id="PTHR42938:SF9">
    <property type="entry name" value="FORMATE DEHYDROGENASE 1"/>
    <property type="match status" value="1"/>
</dbReference>
<dbReference type="Pfam" id="PF00389">
    <property type="entry name" value="2-Hacid_dh"/>
    <property type="match status" value="1"/>
</dbReference>
<dbReference type="Pfam" id="PF02826">
    <property type="entry name" value="2-Hacid_dh_C"/>
    <property type="match status" value="1"/>
</dbReference>
<dbReference type="Pfam" id="PF11890">
    <property type="entry name" value="DUF3410"/>
    <property type="match status" value="1"/>
</dbReference>
<dbReference type="SUPFAM" id="SSF52283">
    <property type="entry name" value="Formate/glycerate dehydrogenase catalytic domain-like"/>
    <property type="match status" value="1"/>
</dbReference>
<dbReference type="SUPFAM" id="SSF51735">
    <property type="entry name" value="NAD(P)-binding Rossmann-fold domains"/>
    <property type="match status" value="1"/>
</dbReference>
<dbReference type="PROSITE" id="PS00065">
    <property type="entry name" value="D_2_HYDROXYACID_DH_1"/>
    <property type="match status" value="1"/>
</dbReference>
<dbReference type="PROSITE" id="PS00671">
    <property type="entry name" value="D_2_HYDROXYACID_DH_3"/>
    <property type="match status" value="1"/>
</dbReference>
<name>PDXB_SHIBS</name>
<comment type="function">
    <text evidence="1">Catalyzes the oxidation of erythronate-4-phosphate to 3-hydroxy-2-oxo-4-phosphonooxybutanoate.</text>
</comment>
<comment type="catalytic activity">
    <reaction evidence="1">
        <text>4-phospho-D-erythronate + NAD(+) = (R)-3-hydroxy-2-oxo-4-phosphooxybutanoate + NADH + H(+)</text>
        <dbReference type="Rhea" id="RHEA:18829"/>
        <dbReference type="ChEBI" id="CHEBI:15378"/>
        <dbReference type="ChEBI" id="CHEBI:57540"/>
        <dbReference type="ChEBI" id="CHEBI:57945"/>
        <dbReference type="ChEBI" id="CHEBI:58538"/>
        <dbReference type="ChEBI" id="CHEBI:58766"/>
        <dbReference type="EC" id="1.1.1.290"/>
    </reaction>
</comment>
<comment type="pathway">
    <text evidence="1">Cofactor biosynthesis; pyridoxine 5'-phosphate biosynthesis; pyridoxine 5'-phosphate from D-erythrose 4-phosphate: step 2/5.</text>
</comment>
<comment type="subunit">
    <text evidence="1">Homodimer.</text>
</comment>
<comment type="subcellular location">
    <subcellularLocation>
        <location evidence="1">Cytoplasm</location>
    </subcellularLocation>
</comment>
<comment type="similarity">
    <text evidence="1">Belongs to the D-isomer specific 2-hydroxyacid dehydrogenase family. PdxB subfamily.</text>
</comment>
<reference key="1">
    <citation type="journal article" date="2005" name="Nucleic Acids Res.">
        <title>Genome dynamics and diversity of Shigella species, the etiologic agents of bacillary dysentery.</title>
        <authorList>
            <person name="Yang F."/>
            <person name="Yang J."/>
            <person name="Zhang X."/>
            <person name="Chen L."/>
            <person name="Jiang Y."/>
            <person name="Yan Y."/>
            <person name="Tang X."/>
            <person name="Wang J."/>
            <person name="Xiong Z."/>
            <person name="Dong J."/>
            <person name="Xue Y."/>
            <person name="Zhu Y."/>
            <person name="Xu X."/>
            <person name="Sun L."/>
            <person name="Chen S."/>
            <person name="Nie H."/>
            <person name="Peng J."/>
            <person name="Xu J."/>
            <person name="Wang Y."/>
            <person name="Yuan Z."/>
            <person name="Wen Y."/>
            <person name="Yao Z."/>
            <person name="Shen Y."/>
            <person name="Qiang B."/>
            <person name="Hou Y."/>
            <person name="Yu J."/>
            <person name="Jin Q."/>
        </authorList>
    </citation>
    <scope>NUCLEOTIDE SEQUENCE [LARGE SCALE GENOMIC DNA]</scope>
    <source>
        <strain>Sb227</strain>
    </source>
</reference>
<organism>
    <name type="scientific">Shigella boydii serotype 4 (strain Sb227)</name>
    <dbReference type="NCBI Taxonomy" id="300268"/>
    <lineage>
        <taxon>Bacteria</taxon>
        <taxon>Pseudomonadati</taxon>
        <taxon>Pseudomonadota</taxon>
        <taxon>Gammaproteobacteria</taxon>
        <taxon>Enterobacterales</taxon>
        <taxon>Enterobacteriaceae</taxon>
        <taxon>Shigella</taxon>
    </lineage>
</organism>
<gene>
    <name evidence="1" type="primary">pdxB</name>
    <name type="ordered locus">SBO_2357</name>
</gene>
<evidence type="ECO:0000255" key="1">
    <source>
        <dbReference type="HAMAP-Rule" id="MF_01825"/>
    </source>
</evidence>
<sequence>MKILVDENMPYARDLFSRLGEVTAVPGRPIAVAQLADADALMVRSVTKVNESLLAGKPIKFVGTATAGTDHVDEAWLKQAGIGFSAAPGCNAIAVVEYVFSSLLMLAERDGFSLHDRTVGIVGVGNVGRRLQARLEALGIKTLLCDPPRADRGDEGDFRSLDELVQHADILTFHTPLFKDGPYKTLHLADEKLIRSLKPGAILINACRGAVVDNTALLTCLNEGQKLSVVLDVWEGEPELNVELLTKVDIGTPHIAGYTLEGKARGTTQVFEAYSKFIGHEQHVALDTLLPAPEFGRITLHGPLDQPTLKRLVHLVYDVRRDDAPLRKVAGIPGEFDKLRKNYLERREWSSLYVICDDASAASLLCKLGFNAVHHPAR</sequence>
<proteinExistence type="inferred from homology"/>
<keyword id="KW-0963">Cytoplasm</keyword>
<keyword id="KW-0520">NAD</keyword>
<keyword id="KW-0560">Oxidoreductase</keyword>
<keyword id="KW-0664">Pyridoxine biosynthesis</keyword>